<keyword id="KW-0121">Carboxypeptidase</keyword>
<keyword id="KW-0903">Direct protein sequencing</keyword>
<keyword id="KW-0378">Hydrolase</keyword>
<keyword id="KW-0482">Metalloprotease</keyword>
<keyword id="KW-0645">Protease</keyword>
<keyword id="KW-0964">Secreted</keyword>
<keyword id="KW-0862">Zinc</keyword>
<keyword id="KW-0865">Zymogen</keyword>
<reference key="1">
    <citation type="journal article" date="1972" name="Biochemistry">
        <title>Isolation and characterization of pancreatic procarboxypeptidase B and carboxypeptidase B of the African lungfish.</title>
        <authorList>
            <person name="Reeck G.R."/>
            <person name="Neurath H."/>
        </authorList>
    </citation>
    <scope>PROTEIN SEQUENCE</scope>
    <source>
        <tissue>Pancreas</tissue>
    </source>
</reference>
<comment type="catalytic activity">
    <reaction>
        <text>Preferential release of a C-terminal lysine or arginine amino acid.</text>
        <dbReference type="EC" id="3.4.17.2"/>
    </reaction>
</comment>
<comment type="cofactor">
    <cofactor evidence="1">
        <name>Zn(2+)</name>
        <dbReference type="ChEBI" id="CHEBI:29105"/>
    </cofactor>
    <text evidence="1">Binds 1 zinc ion per subunit.</text>
</comment>
<comment type="subcellular location">
    <subcellularLocation>
        <location>Secreted</location>
    </subcellularLocation>
</comment>
<comment type="similarity">
    <text evidence="2">Belongs to the peptidase M14 family.</text>
</comment>
<name>CBPB_PROAT</name>
<feature type="propeptide" id="PRO_0000004383" description="Activation peptide">
    <location>
        <begin position="1"/>
        <end position="15" status="greater than"/>
    </location>
</feature>
<feature type="non-terminal residue">
    <location>
        <position position="15"/>
    </location>
</feature>
<dbReference type="EC" id="3.4.17.2"/>
<dbReference type="PIR" id="A26212">
    <property type="entry name" value="A26212"/>
</dbReference>
<dbReference type="GO" id="GO:0005576">
    <property type="term" value="C:extracellular region"/>
    <property type="evidence" value="ECO:0007669"/>
    <property type="project" value="UniProtKB-SubCell"/>
</dbReference>
<dbReference type="GO" id="GO:0004181">
    <property type="term" value="F:metallocarboxypeptidase activity"/>
    <property type="evidence" value="ECO:0007669"/>
    <property type="project" value="UniProtKB-EC"/>
</dbReference>
<dbReference type="GO" id="GO:0006508">
    <property type="term" value="P:proteolysis"/>
    <property type="evidence" value="ECO:0007669"/>
    <property type="project" value="UniProtKB-KW"/>
</dbReference>
<organism>
    <name type="scientific">Protopterus aethiopicus</name>
    <name type="common">Marbled lungfish</name>
    <dbReference type="NCBI Taxonomy" id="7886"/>
    <lineage>
        <taxon>Eukaryota</taxon>
        <taxon>Metazoa</taxon>
        <taxon>Chordata</taxon>
        <taxon>Craniata</taxon>
        <taxon>Vertebrata</taxon>
        <taxon>Euteleostomi</taxon>
        <taxon>Dipnomorpha</taxon>
        <taxon>Ceratodontiformes</taxon>
        <taxon>Lepidosirenoidei</taxon>
        <taxon>Protopteridae</taxon>
        <taxon>Protopterus</taxon>
    </lineage>
</organism>
<proteinExistence type="evidence at protein level"/>
<sequence>EPTPRSFNGDKVFRV</sequence>
<accession>P19628</accession>
<protein>
    <recommendedName>
        <fullName>Carboxypeptidase B</fullName>
        <ecNumber>3.4.17.2</ecNumber>
    </recommendedName>
</protein>
<evidence type="ECO:0000250" key="1">
    <source>
        <dbReference type="UniProtKB" id="P00730"/>
    </source>
</evidence>
<evidence type="ECO:0000305" key="2"/>